<keyword id="KW-0025">Alternative splicing</keyword>
<keyword id="KW-0963">Cytoplasm</keyword>
<keyword id="KW-0968">Cytoplasmic vesicle</keyword>
<keyword id="KW-0333">Golgi apparatus</keyword>
<keyword id="KW-0472">Membrane</keyword>
<keyword id="KW-0532">Neurotransmitter transport</keyword>
<keyword id="KW-1267">Proteomics identification</keyword>
<keyword id="KW-1185">Reference proteome</keyword>
<keyword id="KW-0770">Synapse</keyword>
<keyword id="KW-0813">Transport</keyword>
<protein>
    <recommendedName>
        <fullName>Islet cell autoantigen 1</fullName>
    </recommendedName>
    <alternativeName>
        <fullName>69 kDa islet cell autoantigen</fullName>
        <shortName>ICA69</shortName>
    </alternativeName>
    <alternativeName>
        <fullName>Islet cell autoantigen p69</fullName>
        <shortName>ICAp69</shortName>
        <shortName>p69</shortName>
    </alternativeName>
</protein>
<dbReference type="EMBL" id="L01100">
    <property type="protein sequence ID" value="AAA02564.1"/>
    <property type="molecule type" value="mRNA"/>
</dbReference>
<dbReference type="EMBL" id="L21181">
    <property type="protein sequence ID" value="AAA64927.1"/>
    <property type="molecule type" value="mRNA"/>
</dbReference>
<dbReference type="EMBL" id="U26591">
    <property type="protein sequence ID" value="AAB19033.1"/>
    <property type="molecule type" value="mRNA"/>
</dbReference>
<dbReference type="EMBL" id="U37183">
    <property type="protein sequence ID" value="AAC50935.1"/>
    <property type="molecule type" value="mRNA"/>
</dbReference>
<dbReference type="EMBL" id="U71264">
    <property type="protein sequence ID" value="AAB94738.1"/>
    <property type="molecule type" value="Genomic_DNA"/>
</dbReference>
<dbReference type="EMBL" id="U71251">
    <property type="protein sequence ID" value="AAB94738.1"/>
    <property type="status" value="JOINED"/>
    <property type="molecule type" value="Genomic_DNA"/>
</dbReference>
<dbReference type="EMBL" id="U71252">
    <property type="protein sequence ID" value="AAB94738.1"/>
    <property type="status" value="JOINED"/>
    <property type="molecule type" value="Genomic_DNA"/>
</dbReference>
<dbReference type="EMBL" id="U71253">
    <property type="protein sequence ID" value="AAB94738.1"/>
    <property type="status" value="JOINED"/>
    <property type="molecule type" value="Genomic_DNA"/>
</dbReference>
<dbReference type="EMBL" id="U71255">
    <property type="protein sequence ID" value="AAB94738.1"/>
    <property type="status" value="JOINED"/>
    <property type="molecule type" value="Genomic_DNA"/>
</dbReference>
<dbReference type="EMBL" id="U71256">
    <property type="protein sequence ID" value="AAB94738.1"/>
    <property type="status" value="JOINED"/>
    <property type="molecule type" value="Genomic_DNA"/>
</dbReference>
<dbReference type="EMBL" id="U71257">
    <property type="protein sequence ID" value="AAB94738.1"/>
    <property type="status" value="JOINED"/>
    <property type="molecule type" value="Genomic_DNA"/>
</dbReference>
<dbReference type="EMBL" id="U71258">
    <property type="protein sequence ID" value="AAB94738.1"/>
    <property type="status" value="JOINED"/>
    <property type="molecule type" value="Genomic_DNA"/>
</dbReference>
<dbReference type="EMBL" id="U71259">
    <property type="protein sequence ID" value="AAB94738.1"/>
    <property type="status" value="JOINED"/>
    <property type="molecule type" value="Genomic_DNA"/>
</dbReference>
<dbReference type="EMBL" id="U71260">
    <property type="protein sequence ID" value="AAB94738.1"/>
    <property type="status" value="JOINED"/>
    <property type="molecule type" value="Genomic_DNA"/>
</dbReference>
<dbReference type="EMBL" id="U71261">
    <property type="protein sequence ID" value="AAB94738.1"/>
    <property type="status" value="JOINED"/>
    <property type="molecule type" value="Genomic_DNA"/>
</dbReference>
<dbReference type="EMBL" id="U71262">
    <property type="protein sequence ID" value="AAB94738.1"/>
    <property type="status" value="JOINED"/>
    <property type="molecule type" value="Genomic_DNA"/>
</dbReference>
<dbReference type="EMBL" id="U71263">
    <property type="protein sequence ID" value="AAB94738.1"/>
    <property type="status" value="JOINED"/>
    <property type="molecule type" value="Genomic_DNA"/>
</dbReference>
<dbReference type="EMBL" id="EU416199">
    <property type="protein sequence ID" value="ACB47390.1"/>
    <property type="molecule type" value="mRNA"/>
</dbReference>
<dbReference type="EMBL" id="AK292106">
    <property type="protein sequence ID" value="BAF84795.1"/>
    <property type="molecule type" value="mRNA"/>
</dbReference>
<dbReference type="EMBL" id="AC006042">
    <property type="status" value="NOT_ANNOTATED_CDS"/>
    <property type="molecule type" value="Genomic_DNA"/>
</dbReference>
<dbReference type="EMBL" id="AC007009">
    <property type="status" value="NOT_ANNOTATED_CDS"/>
    <property type="molecule type" value="Genomic_DNA"/>
</dbReference>
<dbReference type="EMBL" id="CH471073">
    <property type="protein sequence ID" value="EAW93610.1"/>
    <property type="molecule type" value="Genomic_DNA"/>
</dbReference>
<dbReference type="EMBL" id="CH471073">
    <property type="protein sequence ID" value="EAW93617.1"/>
    <property type="molecule type" value="Genomic_DNA"/>
</dbReference>
<dbReference type="EMBL" id="BC008640">
    <property type="protein sequence ID" value="AAH08640.1"/>
    <property type="molecule type" value="mRNA"/>
</dbReference>
<dbReference type="CCDS" id="CCDS34602.1">
    <molecule id="Q05084-1"/>
</dbReference>
<dbReference type="CCDS" id="CCDS64595.1">
    <molecule id="Q05084-3"/>
</dbReference>
<dbReference type="CCDS" id="CCDS87478.1">
    <molecule id="Q05084-2"/>
</dbReference>
<dbReference type="PIR" id="I55598">
    <property type="entry name" value="I55598"/>
</dbReference>
<dbReference type="RefSeq" id="NP_001129492.1">
    <molecule id="Q05084-1"/>
    <property type="nucleotide sequence ID" value="NM_001136020.3"/>
</dbReference>
<dbReference type="RefSeq" id="NP_001263407.1">
    <molecule id="Q05084-3"/>
    <property type="nucleotide sequence ID" value="NM_001276478.2"/>
</dbReference>
<dbReference type="RefSeq" id="NP_001337748.1">
    <molecule id="Q05084-1"/>
    <property type="nucleotide sequence ID" value="NM_001350819.2"/>
</dbReference>
<dbReference type="RefSeq" id="NP_001337749.1">
    <molecule id="Q05084-1"/>
    <property type="nucleotide sequence ID" value="NM_001350820.2"/>
</dbReference>
<dbReference type="RefSeq" id="NP_001337750.1">
    <molecule id="Q05084-3"/>
    <property type="nucleotide sequence ID" value="NM_001350821.2"/>
</dbReference>
<dbReference type="RefSeq" id="NP_001337752.1">
    <molecule id="Q05084-3"/>
    <property type="nucleotide sequence ID" value="NM_001350823.2"/>
</dbReference>
<dbReference type="RefSeq" id="NP_001337753.1">
    <molecule id="Q05084-3"/>
    <property type="nucleotide sequence ID" value="NM_001350824.2"/>
</dbReference>
<dbReference type="RefSeq" id="NP_001337754.1">
    <molecule id="Q05084-3"/>
    <property type="nucleotide sequence ID" value="NM_001350825.2"/>
</dbReference>
<dbReference type="RefSeq" id="NP_001337755.1">
    <molecule id="Q05084-2"/>
    <property type="nucleotide sequence ID" value="NM_001350826.2"/>
</dbReference>
<dbReference type="RefSeq" id="NP_001337756.1">
    <molecule id="Q05084-2"/>
    <property type="nucleotide sequence ID" value="NM_001350827.2"/>
</dbReference>
<dbReference type="RefSeq" id="NP_004959.2">
    <molecule id="Q05084-1"/>
    <property type="nucleotide sequence ID" value="NM_004968.4"/>
</dbReference>
<dbReference type="RefSeq" id="NP_071682.1">
    <molecule id="Q05084-1"/>
    <property type="nucleotide sequence ID" value="NM_022307.3"/>
</dbReference>
<dbReference type="RefSeq" id="XP_005249792.1">
    <property type="nucleotide sequence ID" value="XM_005249735.3"/>
</dbReference>
<dbReference type="RefSeq" id="XP_011513647.1">
    <property type="nucleotide sequence ID" value="XM_011515345.1"/>
</dbReference>
<dbReference type="RefSeq" id="XP_011513648.1">
    <property type="nucleotide sequence ID" value="XM_011515346.1"/>
</dbReference>
<dbReference type="RefSeq" id="XP_011513649.1">
    <molecule id="Q05084-2"/>
    <property type="nucleotide sequence ID" value="XM_011515347.4"/>
</dbReference>
<dbReference type="RefSeq" id="XP_011513650.1">
    <molecule id="Q05084-2"/>
    <property type="nucleotide sequence ID" value="XM_011515348.2"/>
</dbReference>
<dbReference type="RefSeq" id="XP_011513651.1">
    <molecule id="Q05084-2"/>
    <property type="nucleotide sequence ID" value="XM_011515349.2"/>
</dbReference>
<dbReference type="RefSeq" id="XP_016867606.1">
    <property type="nucleotide sequence ID" value="XM_017012117.1"/>
</dbReference>
<dbReference type="RefSeq" id="XP_016867607.1">
    <property type="nucleotide sequence ID" value="XM_017012118.1"/>
</dbReference>
<dbReference type="RefSeq" id="XP_016867608.1">
    <property type="nucleotide sequence ID" value="XM_017012119.1"/>
</dbReference>
<dbReference type="RefSeq" id="XP_016867609.1">
    <property type="nucleotide sequence ID" value="XM_017012120.1"/>
</dbReference>
<dbReference type="RefSeq" id="XP_016867610.1">
    <property type="nucleotide sequence ID" value="XM_017012121.1"/>
</dbReference>
<dbReference type="RefSeq" id="XP_054214051.1">
    <molecule id="Q05084-2"/>
    <property type="nucleotide sequence ID" value="XM_054358076.1"/>
</dbReference>
<dbReference type="RefSeq" id="XP_054214052.1">
    <molecule id="Q05084-2"/>
    <property type="nucleotide sequence ID" value="XM_054358077.1"/>
</dbReference>
<dbReference type="RefSeq" id="XP_054214053.1">
    <molecule id="Q05084-2"/>
    <property type="nucleotide sequence ID" value="XM_054358078.1"/>
</dbReference>
<dbReference type="SMR" id="Q05084"/>
<dbReference type="BioGRID" id="109609">
    <property type="interactions" value="28"/>
</dbReference>
<dbReference type="FunCoup" id="Q05084">
    <property type="interactions" value="795"/>
</dbReference>
<dbReference type="IntAct" id="Q05084">
    <property type="interactions" value="21"/>
</dbReference>
<dbReference type="MINT" id="Q05084"/>
<dbReference type="STRING" id="9606.ENSP00000403982"/>
<dbReference type="iPTMnet" id="Q05084"/>
<dbReference type="PhosphoSitePlus" id="Q05084"/>
<dbReference type="BioMuta" id="ICA1"/>
<dbReference type="DMDM" id="20141584"/>
<dbReference type="jPOST" id="Q05084"/>
<dbReference type="MassIVE" id="Q05084"/>
<dbReference type="PaxDb" id="9606-ENSP00000385570"/>
<dbReference type="PeptideAtlas" id="Q05084"/>
<dbReference type="ProteomicsDB" id="3477"/>
<dbReference type="ProteomicsDB" id="58305">
    <molecule id="Q05084-1"/>
</dbReference>
<dbReference type="ProteomicsDB" id="76745"/>
<dbReference type="Pumba" id="Q05084"/>
<dbReference type="Antibodypedia" id="1895">
    <property type="antibodies" value="256 antibodies from 29 providers"/>
</dbReference>
<dbReference type="DNASU" id="3382"/>
<dbReference type="Ensembl" id="ENST00000265577.11">
    <molecule id="Q05084-3"/>
    <property type="protein sequence ID" value="ENSP00000265577.7"/>
    <property type="gene ID" value="ENSG00000003147.19"/>
</dbReference>
<dbReference type="Ensembl" id="ENST00000396675.7">
    <molecule id="Q05084-1"/>
    <property type="protein sequence ID" value="ENSP00000379908.3"/>
    <property type="gene ID" value="ENSG00000003147.19"/>
</dbReference>
<dbReference type="Ensembl" id="ENST00000402384.8">
    <molecule id="Q05084-1"/>
    <property type="protein sequence ID" value="ENSP00000385570.3"/>
    <property type="gene ID" value="ENSG00000003147.19"/>
</dbReference>
<dbReference type="Ensembl" id="ENST00000406470.6">
    <molecule id="Q05084-1"/>
    <property type="protein sequence ID" value="ENSP00000385651.2"/>
    <property type="gene ID" value="ENSG00000003147.19"/>
</dbReference>
<dbReference type="Ensembl" id="ENST00000422063.6">
    <molecule id="Q05084-2"/>
    <property type="protein sequence ID" value="ENSP00000403982.2"/>
    <property type="gene ID" value="ENSG00000003147.19"/>
</dbReference>
<dbReference type="GeneID" id="3382"/>
<dbReference type="KEGG" id="hsa:3382"/>
<dbReference type="MANE-Select" id="ENST00000402384.8">
    <property type="protein sequence ID" value="ENSP00000385570.3"/>
    <property type="RefSeq nucleotide sequence ID" value="NM_001136020.3"/>
    <property type="RefSeq protein sequence ID" value="NP_001129492.1"/>
</dbReference>
<dbReference type="UCSC" id="uc003srm.4">
    <molecule id="Q05084-1"/>
    <property type="organism name" value="human"/>
</dbReference>
<dbReference type="AGR" id="HGNC:5343"/>
<dbReference type="CTD" id="3382"/>
<dbReference type="DisGeNET" id="3382"/>
<dbReference type="GeneCards" id="ICA1"/>
<dbReference type="HGNC" id="HGNC:5343">
    <property type="gene designation" value="ICA1"/>
</dbReference>
<dbReference type="HPA" id="ENSG00000003147">
    <property type="expression patterns" value="Low tissue specificity"/>
</dbReference>
<dbReference type="MIM" id="147625">
    <property type="type" value="gene"/>
</dbReference>
<dbReference type="neXtProt" id="NX_Q05084"/>
<dbReference type="NIAGADS" id="ENSG00000003147"/>
<dbReference type="OpenTargets" id="ENSG00000003147"/>
<dbReference type="PharmGKB" id="PA29591"/>
<dbReference type="VEuPathDB" id="HostDB:ENSG00000003147"/>
<dbReference type="eggNOG" id="KOG3891">
    <property type="taxonomic scope" value="Eukaryota"/>
</dbReference>
<dbReference type="GeneTree" id="ENSGT00390000005530"/>
<dbReference type="InParanoid" id="Q05084"/>
<dbReference type="OMA" id="FGPFMDF"/>
<dbReference type="OrthoDB" id="2126778at2759"/>
<dbReference type="PAN-GO" id="Q05084">
    <property type="GO annotations" value="2 GO annotations based on evolutionary models"/>
</dbReference>
<dbReference type="PhylomeDB" id="Q05084"/>
<dbReference type="TreeFam" id="TF317186"/>
<dbReference type="PathwayCommons" id="Q05084"/>
<dbReference type="SignaLink" id="Q05084"/>
<dbReference type="SIGNOR" id="Q05084"/>
<dbReference type="BioGRID-ORCS" id="3382">
    <property type="hits" value="11 hits in 1158 CRISPR screens"/>
</dbReference>
<dbReference type="ChiTaRS" id="ICA1">
    <property type="organism name" value="human"/>
</dbReference>
<dbReference type="GeneWiki" id="ICA1"/>
<dbReference type="GenomeRNAi" id="3382"/>
<dbReference type="Pharos" id="Q05084">
    <property type="development level" value="Tbio"/>
</dbReference>
<dbReference type="PRO" id="PR:Q05084"/>
<dbReference type="Proteomes" id="UP000005640">
    <property type="component" value="Chromosome 7"/>
</dbReference>
<dbReference type="RNAct" id="Q05084">
    <property type="molecule type" value="protein"/>
</dbReference>
<dbReference type="Bgee" id="ENSG00000003147">
    <property type="expression patterns" value="Expressed in body of pancreas and 183 other cell types or tissues"/>
</dbReference>
<dbReference type="ExpressionAtlas" id="Q05084">
    <property type="expression patterns" value="baseline and differential"/>
</dbReference>
<dbReference type="GO" id="GO:0005737">
    <property type="term" value="C:cytoplasm"/>
    <property type="evidence" value="ECO:0000304"/>
    <property type="project" value="ProtInc"/>
</dbReference>
<dbReference type="GO" id="GO:0005829">
    <property type="term" value="C:cytosol"/>
    <property type="evidence" value="ECO:0000314"/>
    <property type="project" value="HPA"/>
</dbReference>
<dbReference type="GO" id="GO:0005794">
    <property type="term" value="C:Golgi apparatus"/>
    <property type="evidence" value="ECO:0000318"/>
    <property type="project" value="GO_Central"/>
</dbReference>
<dbReference type="GO" id="GO:0000139">
    <property type="term" value="C:Golgi membrane"/>
    <property type="evidence" value="ECO:0000314"/>
    <property type="project" value="UniProtKB"/>
</dbReference>
<dbReference type="GO" id="GO:0043231">
    <property type="term" value="C:intracellular membrane-bounded organelle"/>
    <property type="evidence" value="ECO:0000314"/>
    <property type="project" value="HPA"/>
</dbReference>
<dbReference type="GO" id="GO:0030667">
    <property type="term" value="C:secretory granule membrane"/>
    <property type="evidence" value="ECO:0000314"/>
    <property type="project" value="UniProtKB"/>
</dbReference>
<dbReference type="GO" id="GO:0030672">
    <property type="term" value="C:synaptic vesicle membrane"/>
    <property type="evidence" value="ECO:0000250"/>
    <property type="project" value="UniProtKB"/>
</dbReference>
<dbReference type="GO" id="GO:0140090">
    <property type="term" value="F:membrane curvature sensor activity"/>
    <property type="evidence" value="ECO:0000314"/>
    <property type="project" value="FlyBase"/>
</dbReference>
<dbReference type="GO" id="GO:0019904">
    <property type="term" value="F:protein domain specific binding"/>
    <property type="evidence" value="ECO:0007669"/>
    <property type="project" value="InterPro"/>
</dbReference>
<dbReference type="GO" id="GO:0006836">
    <property type="term" value="P:neurotransmitter transport"/>
    <property type="evidence" value="ECO:0007669"/>
    <property type="project" value="UniProtKB-KW"/>
</dbReference>
<dbReference type="GO" id="GO:0051049">
    <property type="term" value="P:regulation of transport"/>
    <property type="evidence" value="ECO:0000318"/>
    <property type="project" value="GO_Central"/>
</dbReference>
<dbReference type="CDD" id="cd07661">
    <property type="entry name" value="BAR_ICA69"/>
    <property type="match status" value="1"/>
</dbReference>
<dbReference type="FunFam" id="1.20.1270.60:FF:000015">
    <property type="entry name" value="Islet cell autoantigen 1, 69kDa"/>
    <property type="match status" value="1"/>
</dbReference>
<dbReference type="Gene3D" id="1.20.1270.60">
    <property type="entry name" value="Arfaptin homology (AH) domain/BAR domain"/>
    <property type="match status" value="1"/>
</dbReference>
<dbReference type="InterPro" id="IPR027267">
    <property type="entry name" value="AH/BAR_dom_sf"/>
</dbReference>
<dbReference type="InterPro" id="IPR010504">
    <property type="entry name" value="AH_dom"/>
</dbReference>
<dbReference type="InterPro" id="IPR024114">
    <property type="entry name" value="Islet_autoAg_Ica1/Ica1-like"/>
</dbReference>
<dbReference type="InterPro" id="IPR006723">
    <property type="entry name" value="Islet_autoAg_Ica1_C"/>
</dbReference>
<dbReference type="PANTHER" id="PTHR10164">
    <property type="entry name" value="ISLET CELL AUTOANTIGEN 1"/>
    <property type="match status" value="1"/>
</dbReference>
<dbReference type="PANTHER" id="PTHR10164:SF3">
    <property type="entry name" value="ISLET CELL AUTOANTIGEN 1"/>
    <property type="match status" value="1"/>
</dbReference>
<dbReference type="Pfam" id="PF06456">
    <property type="entry name" value="Arfaptin"/>
    <property type="match status" value="1"/>
</dbReference>
<dbReference type="Pfam" id="PF04629">
    <property type="entry name" value="ICA69"/>
    <property type="match status" value="2"/>
</dbReference>
<dbReference type="SMART" id="SM01015">
    <property type="entry name" value="Arfaptin"/>
    <property type="match status" value="1"/>
</dbReference>
<dbReference type="SMART" id="SM01237">
    <property type="entry name" value="ICA69"/>
    <property type="match status" value="1"/>
</dbReference>
<dbReference type="SUPFAM" id="SSF103657">
    <property type="entry name" value="BAR/IMD domain-like"/>
    <property type="match status" value="1"/>
</dbReference>
<dbReference type="PROSITE" id="PS50870">
    <property type="entry name" value="AH"/>
    <property type="match status" value="1"/>
</dbReference>
<feature type="chain" id="PRO_0000084130" description="Islet cell autoantigen 1">
    <location>
        <begin position="1"/>
        <end position="483"/>
    </location>
</feature>
<feature type="domain" description="AH" evidence="2">
    <location>
        <begin position="51"/>
        <end position="254"/>
    </location>
</feature>
<feature type="region of interest" description="Disordered" evidence="3">
    <location>
        <begin position="281"/>
        <end position="321"/>
    </location>
</feature>
<feature type="compositionally biased region" description="Polar residues" evidence="3">
    <location>
        <begin position="288"/>
        <end position="303"/>
    </location>
</feature>
<feature type="compositionally biased region" description="Basic and acidic residues" evidence="3">
    <location>
        <begin position="308"/>
        <end position="321"/>
    </location>
</feature>
<feature type="splice variant" id="VSP_055405" description="In isoform 3." evidence="5">
    <location>
        <position position="7"/>
    </location>
</feature>
<feature type="splice variant" id="VSP_047761" description="In isoform 2." evidence="6">
    <original>Q</original>
    <variation>QYLQNICLEMKANSDIKMLQKGKEGQQIGI</variation>
    <location>
        <position position="301"/>
    </location>
</feature>
<feature type="sequence conflict" description="In Ref. 1; AAA02564." evidence="7" ref="1">
    <original>K</original>
    <variation>R</variation>
    <location>
        <position position="29"/>
    </location>
</feature>
<feature type="sequence conflict" description="In Ref. 2; AAA64927." evidence="7" ref="2">
    <original>R</original>
    <variation>G</variation>
    <location>
        <position position="83"/>
    </location>
</feature>
<sequence length="483" mass="54645">MSGHKCSYPWDLQDRYAQDKSVVNKMQQKYWETKQAFIKATGKKEDEHVVASDADLDAKLELFHSIQRTCLDLSKAIVLYQKRICFLSQEENELGKFLRSQGFQDKTRAGKMMQATGKALCFSSQQRLALRNPLCRFHQEVETFRHRAISDTWLTVNRMEQCRTEYRGALLWMKDVSQELDPDLYKQMEKFRKVQTQVRLAKKNFDKLKMDVCQKVDLLGASRCNLLSHMLATYQTTLLHFWEKTSHTMAAIHESFKGYQPYEFTTLKSLQDPMKKLVEKEEKKKINQQESTDAAVQEPSQLISLEEENQRKESSSFKTEDGKSILSALDKGSTHTACSGPIDELLDMKSEEGACLGPVAGTPEPEGADKDDLLLLSEIFNASSLEEGEFSKEWAAVFGDGQVKEPVPTMALGEPDPKAQTGSGFLPSQLLDQNMKDLQASLQEPAKAASDLTAWFSLFADLDPLSNPDAVGKTDKEHELLNA</sequence>
<evidence type="ECO:0000250" key="1"/>
<evidence type="ECO:0000255" key="2">
    <source>
        <dbReference type="PROSITE-ProRule" id="PRU00294"/>
    </source>
</evidence>
<evidence type="ECO:0000256" key="3">
    <source>
        <dbReference type="SAM" id="MobiDB-lite"/>
    </source>
</evidence>
<evidence type="ECO:0000269" key="4">
    <source>
    </source>
</evidence>
<evidence type="ECO:0000303" key="5">
    <source>
    </source>
</evidence>
<evidence type="ECO:0000303" key="6">
    <source ref="4"/>
</evidence>
<evidence type="ECO:0000305" key="7"/>
<gene>
    <name type="primary">ICA1</name>
</gene>
<organism>
    <name type="scientific">Homo sapiens</name>
    <name type="common">Human</name>
    <dbReference type="NCBI Taxonomy" id="9606"/>
    <lineage>
        <taxon>Eukaryota</taxon>
        <taxon>Metazoa</taxon>
        <taxon>Chordata</taxon>
        <taxon>Craniata</taxon>
        <taxon>Vertebrata</taxon>
        <taxon>Euteleostomi</taxon>
        <taxon>Mammalia</taxon>
        <taxon>Eutheria</taxon>
        <taxon>Euarchontoglires</taxon>
        <taxon>Primates</taxon>
        <taxon>Haplorrhini</taxon>
        <taxon>Catarrhini</taxon>
        <taxon>Hominidae</taxon>
        <taxon>Homo</taxon>
    </lineage>
</organism>
<reference key="1">
    <citation type="journal article" date="1993" name="J. Clin. Invest.">
        <title>Islet cell autoantigen 69 kD (ICA69). Molecular cloning and characterization of a novel diabetes-associated autoantigen.</title>
        <authorList>
            <person name="Pietropaolo M."/>
            <person name="Castano L."/>
            <person name="Babu S."/>
            <person name="Buelow R."/>
            <person name="Kuo Y.-L.S."/>
            <person name="Martin S."/>
            <person name="Martin A."/>
            <person name="Powers A.C."/>
            <person name="Prochazka M."/>
            <person name="Naggert J."/>
            <person name="Leiter E.H."/>
            <person name="Eisenbarth G.S."/>
        </authorList>
    </citation>
    <scope>NUCLEOTIDE SEQUENCE [MRNA] (ISOFORM 1)</scope>
    <source>
        <tissue>Pancreas</tissue>
    </source>
</reference>
<reference key="2">
    <citation type="journal article" date="1994" name="Biochim. Biophys. Acta">
        <title>Cloning of human and rat p69 cDNA, a candidate autoimmune target in type 1 diabetes.</title>
        <authorList>
            <person name="Miyazaki I."/>
            <person name="Gaedigk R."/>
            <person name="Hui M.F."/>
            <person name="Cheung R.K."/>
            <person name="Morkowski J."/>
            <person name="Rajotte R.V."/>
            <person name="Dosch H.-M."/>
        </authorList>
    </citation>
    <scope>NUCLEOTIDE SEQUENCE [MRNA] (ISOFORM 1)</scope>
    <source>
        <tissue>Pancreatic islet</tissue>
    </source>
</reference>
<reference key="3">
    <citation type="journal article" date="1996" name="Genomics">
        <title>Genomic organization and transcript analysis of ICAp69, a target antigen in diabetic autoimmunity.</title>
        <authorList>
            <person name="Gaedigk R."/>
            <person name="Karges W."/>
            <person name="Hui M.F."/>
            <person name="Scherer S.W."/>
            <person name="Dosch H.-M."/>
        </authorList>
    </citation>
    <scope>NUCLEOTIDE SEQUENCE [MRNA] (ISOFORM 1)</scope>
</reference>
<reference key="4">
    <citation type="submission" date="2008-01" db="EMBL/GenBank/DDBJ databases">
        <title>A new transcript variant of human ICA69.</title>
        <authorList>
            <person name="Hoehne M."/>
            <person name="Lorscheider J."/>
            <person name="Schermer B."/>
            <person name="Benzing T."/>
        </authorList>
    </citation>
    <scope>NUCLEOTIDE SEQUENCE [MRNA] (ISOFORM 2)</scope>
    <source>
        <tissue>Brain</tissue>
    </source>
</reference>
<reference key="5">
    <citation type="journal article" date="2004" name="Nat. Genet.">
        <title>Complete sequencing and characterization of 21,243 full-length human cDNAs.</title>
        <authorList>
            <person name="Ota T."/>
            <person name="Suzuki Y."/>
            <person name="Nishikawa T."/>
            <person name="Otsuki T."/>
            <person name="Sugiyama T."/>
            <person name="Irie R."/>
            <person name="Wakamatsu A."/>
            <person name="Hayashi K."/>
            <person name="Sato H."/>
            <person name="Nagai K."/>
            <person name="Kimura K."/>
            <person name="Makita H."/>
            <person name="Sekine M."/>
            <person name="Obayashi M."/>
            <person name="Nishi T."/>
            <person name="Shibahara T."/>
            <person name="Tanaka T."/>
            <person name="Ishii S."/>
            <person name="Yamamoto J."/>
            <person name="Saito K."/>
            <person name="Kawai Y."/>
            <person name="Isono Y."/>
            <person name="Nakamura Y."/>
            <person name="Nagahari K."/>
            <person name="Murakami K."/>
            <person name="Yasuda T."/>
            <person name="Iwayanagi T."/>
            <person name="Wagatsuma M."/>
            <person name="Shiratori A."/>
            <person name="Sudo H."/>
            <person name="Hosoiri T."/>
            <person name="Kaku Y."/>
            <person name="Kodaira H."/>
            <person name="Kondo H."/>
            <person name="Sugawara M."/>
            <person name="Takahashi M."/>
            <person name="Kanda K."/>
            <person name="Yokoi T."/>
            <person name="Furuya T."/>
            <person name="Kikkawa E."/>
            <person name="Omura Y."/>
            <person name="Abe K."/>
            <person name="Kamihara K."/>
            <person name="Katsuta N."/>
            <person name="Sato K."/>
            <person name="Tanikawa M."/>
            <person name="Yamazaki M."/>
            <person name="Ninomiya K."/>
            <person name="Ishibashi T."/>
            <person name="Yamashita H."/>
            <person name="Murakawa K."/>
            <person name="Fujimori K."/>
            <person name="Tanai H."/>
            <person name="Kimata M."/>
            <person name="Watanabe M."/>
            <person name="Hiraoka S."/>
            <person name="Chiba Y."/>
            <person name="Ishida S."/>
            <person name="Ono Y."/>
            <person name="Takiguchi S."/>
            <person name="Watanabe S."/>
            <person name="Yosida M."/>
            <person name="Hotuta T."/>
            <person name="Kusano J."/>
            <person name="Kanehori K."/>
            <person name="Takahashi-Fujii A."/>
            <person name="Hara H."/>
            <person name="Tanase T.-O."/>
            <person name="Nomura Y."/>
            <person name="Togiya S."/>
            <person name="Komai F."/>
            <person name="Hara R."/>
            <person name="Takeuchi K."/>
            <person name="Arita M."/>
            <person name="Imose N."/>
            <person name="Musashino K."/>
            <person name="Yuuki H."/>
            <person name="Oshima A."/>
            <person name="Sasaki N."/>
            <person name="Aotsuka S."/>
            <person name="Yoshikawa Y."/>
            <person name="Matsunawa H."/>
            <person name="Ichihara T."/>
            <person name="Shiohata N."/>
            <person name="Sano S."/>
            <person name="Moriya S."/>
            <person name="Momiyama H."/>
            <person name="Satoh N."/>
            <person name="Takami S."/>
            <person name="Terashima Y."/>
            <person name="Suzuki O."/>
            <person name="Nakagawa S."/>
            <person name="Senoh A."/>
            <person name="Mizoguchi H."/>
            <person name="Goto Y."/>
            <person name="Shimizu F."/>
            <person name="Wakebe H."/>
            <person name="Hishigaki H."/>
            <person name="Watanabe T."/>
            <person name="Sugiyama A."/>
            <person name="Takemoto M."/>
            <person name="Kawakami B."/>
            <person name="Yamazaki M."/>
            <person name="Watanabe K."/>
            <person name="Kumagai A."/>
            <person name="Itakura S."/>
            <person name="Fukuzumi Y."/>
            <person name="Fujimori Y."/>
            <person name="Komiyama M."/>
            <person name="Tashiro H."/>
            <person name="Tanigami A."/>
            <person name="Fujiwara T."/>
            <person name="Ono T."/>
            <person name="Yamada K."/>
            <person name="Fujii Y."/>
            <person name="Ozaki K."/>
            <person name="Hirao M."/>
            <person name="Ohmori Y."/>
            <person name="Kawabata A."/>
            <person name="Hikiji T."/>
            <person name="Kobatake N."/>
            <person name="Inagaki H."/>
            <person name="Ikema Y."/>
            <person name="Okamoto S."/>
            <person name="Okitani R."/>
            <person name="Kawakami T."/>
            <person name="Noguchi S."/>
            <person name="Itoh T."/>
            <person name="Shigeta K."/>
            <person name="Senba T."/>
            <person name="Matsumura K."/>
            <person name="Nakajima Y."/>
            <person name="Mizuno T."/>
            <person name="Morinaga M."/>
            <person name="Sasaki M."/>
            <person name="Togashi T."/>
            <person name="Oyama M."/>
            <person name="Hata H."/>
            <person name="Watanabe M."/>
            <person name="Komatsu T."/>
            <person name="Mizushima-Sugano J."/>
            <person name="Satoh T."/>
            <person name="Shirai Y."/>
            <person name="Takahashi Y."/>
            <person name="Nakagawa K."/>
            <person name="Okumura K."/>
            <person name="Nagase T."/>
            <person name="Nomura N."/>
            <person name="Kikuchi H."/>
            <person name="Masuho Y."/>
            <person name="Yamashita R."/>
            <person name="Nakai K."/>
            <person name="Yada T."/>
            <person name="Nakamura Y."/>
            <person name="Ohara O."/>
            <person name="Isogai T."/>
            <person name="Sugano S."/>
        </authorList>
    </citation>
    <scope>NUCLEOTIDE SEQUENCE [LARGE SCALE MRNA] (ISOFORM 1)</scope>
    <source>
        <tissue>Synovium</tissue>
    </source>
</reference>
<reference key="6">
    <citation type="journal article" date="2003" name="Nature">
        <title>The DNA sequence of human chromosome 7.</title>
        <authorList>
            <person name="Hillier L.W."/>
            <person name="Fulton R.S."/>
            <person name="Fulton L.A."/>
            <person name="Graves T.A."/>
            <person name="Pepin K.H."/>
            <person name="Wagner-McPherson C."/>
            <person name="Layman D."/>
            <person name="Maas J."/>
            <person name="Jaeger S."/>
            <person name="Walker R."/>
            <person name="Wylie K."/>
            <person name="Sekhon M."/>
            <person name="Becker M.C."/>
            <person name="O'Laughlin M.D."/>
            <person name="Schaller M.E."/>
            <person name="Fewell G.A."/>
            <person name="Delehaunty K.D."/>
            <person name="Miner T.L."/>
            <person name="Nash W.E."/>
            <person name="Cordes M."/>
            <person name="Du H."/>
            <person name="Sun H."/>
            <person name="Edwards J."/>
            <person name="Bradshaw-Cordum H."/>
            <person name="Ali J."/>
            <person name="Andrews S."/>
            <person name="Isak A."/>
            <person name="Vanbrunt A."/>
            <person name="Nguyen C."/>
            <person name="Du F."/>
            <person name="Lamar B."/>
            <person name="Courtney L."/>
            <person name="Kalicki J."/>
            <person name="Ozersky P."/>
            <person name="Bielicki L."/>
            <person name="Scott K."/>
            <person name="Holmes A."/>
            <person name="Harkins R."/>
            <person name="Harris A."/>
            <person name="Strong C.M."/>
            <person name="Hou S."/>
            <person name="Tomlinson C."/>
            <person name="Dauphin-Kohlberg S."/>
            <person name="Kozlowicz-Reilly A."/>
            <person name="Leonard S."/>
            <person name="Rohlfing T."/>
            <person name="Rock S.M."/>
            <person name="Tin-Wollam A.-M."/>
            <person name="Abbott A."/>
            <person name="Minx P."/>
            <person name="Maupin R."/>
            <person name="Strowmatt C."/>
            <person name="Latreille P."/>
            <person name="Miller N."/>
            <person name="Johnson D."/>
            <person name="Murray J."/>
            <person name="Woessner J.P."/>
            <person name="Wendl M.C."/>
            <person name="Yang S.-P."/>
            <person name="Schultz B.R."/>
            <person name="Wallis J.W."/>
            <person name="Spieth J."/>
            <person name="Bieri T.A."/>
            <person name="Nelson J.O."/>
            <person name="Berkowicz N."/>
            <person name="Wohldmann P.E."/>
            <person name="Cook L.L."/>
            <person name="Hickenbotham M.T."/>
            <person name="Eldred J."/>
            <person name="Williams D."/>
            <person name="Bedell J.A."/>
            <person name="Mardis E.R."/>
            <person name="Clifton S.W."/>
            <person name="Chissoe S.L."/>
            <person name="Marra M.A."/>
            <person name="Raymond C."/>
            <person name="Haugen E."/>
            <person name="Gillett W."/>
            <person name="Zhou Y."/>
            <person name="James R."/>
            <person name="Phelps K."/>
            <person name="Iadanoto S."/>
            <person name="Bubb K."/>
            <person name="Simms E."/>
            <person name="Levy R."/>
            <person name="Clendenning J."/>
            <person name="Kaul R."/>
            <person name="Kent W.J."/>
            <person name="Furey T.S."/>
            <person name="Baertsch R.A."/>
            <person name="Brent M.R."/>
            <person name="Keibler E."/>
            <person name="Flicek P."/>
            <person name="Bork P."/>
            <person name="Suyama M."/>
            <person name="Bailey J.A."/>
            <person name="Portnoy M.E."/>
            <person name="Torrents D."/>
            <person name="Chinwalla A.T."/>
            <person name="Gish W.R."/>
            <person name="Eddy S.R."/>
            <person name="McPherson J.D."/>
            <person name="Olson M.V."/>
            <person name="Eichler E.E."/>
            <person name="Green E.D."/>
            <person name="Waterston R.H."/>
            <person name="Wilson R.K."/>
        </authorList>
    </citation>
    <scope>NUCLEOTIDE SEQUENCE [LARGE SCALE GENOMIC DNA]</scope>
</reference>
<reference key="7">
    <citation type="submission" date="2005-07" db="EMBL/GenBank/DDBJ databases">
        <authorList>
            <person name="Mural R.J."/>
            <person name="Istrail S."/>
            <person name="Sutton G.G."/>
            <person name="Florea L."/>
            <person name="Halpern A.L."/>
            <person name="Mobarry C.M."/>
            <person name="Lippert R."/>
            <person name="Walenz B."/>
            <person name="Shatkay H."/>
            <person name="Dew I."/>
            <person name="Miller J.R."/>
            <person name="Flanigan M.J."/>
            <person name="Edwards N.J."/>
            <person name="Bolanos R."/>
            <person name="Fasulo D."/>
            <person name="Halldorsson B.V."/>
            <person name="Hannenhalli S."/>
            <person name="Turner R."/>
            <person name="Yooseph S."/>
            <person name="Lu F."/>
            <person name="Nusskern D.R."/>
            <person name="Shue B.C."/>
            <person name="Zheng X.H."/>
            <person name="Zhong F."/>
            <person name="Delcher A.L."/>
            <person name="Huson D.H."/>
            <person name="Kravitz S.A."/>
            <person name="Mouchard L."/>
            <person name="Reinert K."/>
            <person name="Remington K.A."/>
            <person name="Clark A.G."/>
            <person name="Waterman M.S."/>
            <person name="Eichler E.E."/>
            <person name="Adams M.D."/>
            <person name="Hunkapiller M.W."/>
            <person name="Myers E.W."/>
            <person name="Venter J.C."/>
        </authorList>
    </citation>
    <scope>NUCLEOTIDE SEQUENCE [LARGE SCALE GENOMIC DNA]</scope>
</reference>
<reference key="8">
    <citation type="journal article" date="2004" name="Genome Res.">
        <title>The status, quality, and expansion of the NIH full-length cDNA project: the Mammalian Gene Collection (MGC).</title>
        <authorList>
            <consortium name="The MGC Project Team"/>
        </authorList>
    </citation>
    <scope>NUCLEOTIDE SEQUENCE [LARGE SCALE MRNA] (ISOFORM 3)</scope>
    <source>
        <tissue>Colon</tissue>
    </source>
</reference>
<reference key="9">
    <citation type="journal article" date="2003" name="J. Biol. Chem.">
        <title>Islet cell autoantigen of 69 kDa is an arfaptin-related protein associated with the Golgi complex of insulinoma INS-1 cells.</title>
        <authorList>
            <person name="Spitzenberger F."/>
            <person name="Pietropaolo S."/>
            <person name="Verkade P."/>
            <person name="Habermann B."/>
            <person name="Lacas-Gervais S."/>
            <person name="Mziaut H."/>
            <person name="Pietropaolo M."/>
            <person name="Solimena M."/>
        </authorList>
    </citation>
    <scope>SUBCELLULAR LOCATION</scope>
</reference>
<name>ICA69_HUMAN</name>
<comment type="function">
    <text evidence="1">May play a role in neurotransmitter secretion.</text>
</comment>
<comment type="interaction">
    <interactant intactId="EBI-1046751">
        <id>Q05084</id>
    </interactant>
    <interactant intactId="EBI-10258115">
        <id>Q7Z6N9</id>
        <label>CCDC28A</label>
    </interactant>
    <organismsDiffer>false</organismsDiffer>
    <experiments>3</experiments>
</comment>
<comment type="interaction">
    <interactant intactId="EBI-1046751">
        <id>Q05084</id>
    </interactant>
    <interactant intactId="EBI-355471">
        <id>Q8IWP9</id>
        <label>CCDC28A</label>
    </interactant>
    <organismsDiffer>false</organismsDiffer>
    <experiments>3</experiments>
</comment>
<comment type="interaction">
    <interactant intactId="EBI-1046751">
        <id>Q05084</id>
    </interactant>
    <interactant intactId="EBI-488533">
        <id>Q8WYH8</id>
        <label>ING5</label>
    </interactant>
    <organismsDiffer>false</organismsDiffer>
    <experiments>3</experiments>
</comment>
<comment type="interaction">
    <interactant intactId="EBI-1046751">
        <id>Q05084</id>
    </interactant>
    <interactant intactId="EBI-1783068">
        <id>O95983</id>
        <label>MBD3</label>
    </interactant>
    <organismsDiffer>false</organismsDiffer>
    <experiments>3</experiments>
</comment>
<comment type="interaction">
    <interactant intactId="EBI-1046751">
        <id>Q05084</id>
    </interactant>
    <interactant intactId="EBI-752037">
        <id>P61019</id>
        <label>RAB2A</label>
    </interactant>
    <organismsDiffer>false</organismsDiffer>
    <experiments>4</experiments>
</comment>
<comment type="interaction">
    <interactant intactId="EBI-1046751">
        <id>Q05084</id>
    </interactant>
    <interactant intactId="EBI-5542466">
        <id>Q8WUD1</id>
        <label>RAB2B</label>
    </interactant>
    <organismsDiffer>false</organismsDiffer>
    <experiments>4</experiments>
</comment>
<comment type="interaction">
    <interactant intactId="EBI-25930511">
        <id>Q05084-3</id>
    </interactant>
    <interactant intactId="EBI-5235340">
        <id>Q7Z699</id>
        <label>SPRED1</label>
    </interactant>
    <organismsDiffer>false</organismsDiffer>
    <experiments>3</experiments>
</comment>
<comment type="subcellular location">
    <subcellularLocation>
        <location evidence="4">Cytoplasm</location>
        <location evidence="4">Cytosol</location>
    </subcellularLocation>
    <subcellularLocation>
        <location evidence="7">Golgi apparatus membrane</location>
        <topology evidence="7">Peripheral membrane protein</topology>
    </subcellularLocation>
    <subcellularLocation>
        <location evidence="7">Cytoplasmic vesicle</location>
        <location evidence="7">Secretory vesicle membrane</location>
        <topology evidence="7">Peripheral membrane protein</topology>
    </subcellularLocation>
    <subcellularLocation>
        <location evidence="7">Cytoplasmic vesicle</location>
        <location evidence="7">Secretory vesicle</location>
        <location evidence="7">Synaptic vesicle membrane</location>
        <topology evidence="7">Peripheral membrane protein</topology>
    </subcellularLocation>
    <text>Predominantly cytosolic. Also exists as a membrane-bound form which has been found associated with synaptic vesicles and also with the Golgi complex and immature secretory granules.</text>
</comment>
<comment type="alternative products">
    <event type="alternative splicing"/>
    <isoform>
        <id>Q05084-1</id>
        <name>1</name>
        <sequence type="displayed"/>
    </isoform>
    <isoform>
        <id>Q05084-2</id>
        <name>2</name>
        <sequence type="described" ref="VSP_047761"/>
    </isoform>
    <isoform>
        <id>Q05084-3</id>
        <name>3</name>
        <sequence type="described" ref="VSP_055405"/>
    </isoform>
</comment>
<comment type="tissue specificity">
    <text>Expressed abundantly in pancreas, heart and brain with low levels of expression in lung, kidney, liver and thyroid.</text>
</comment>
<proteinExistence type="evidence at protein level"/>
<accession>Q05084</accession>
<accession>A8K7U1</accession>
<accession>B3FTQ2</accession>
<accession>P78506</accession>
<accession>Q13824</accession>
<accession>Q96HG3</accession>